<evidence type="ECO:0000250" key="1">
    <source>
        <dbReference type="UniProtKB" id="A0A0S2UQQ5"/>
    </source>
</evidence>
<evidence type="ECO:0000255" key="2"/>
<evidence type="ECO:0000269" key="3">
    <source>
    </source>
</evidence>
<evidence type="ECO:0000303" key="4">
    <source>
    </source>
</evidence>
<evidence type="ECO:0000305" key="5"/>
<evidence type="ECO:0000312" key="6">
    <source>
        <dbReference type="EMBL" id="AAO67498.1"/>
    </source>
</evidence>
<evidence type="ECO:0000312" key="7">
    <source>
        <dbReference type="EMBL" id="BAF39081.1"/>
    </source>
</evidence>
<accession>A1A048</accession>
<accession>Q5JB57</accession>
<comment type="function">
    <text evidence="3">Hydrolyzes xylooligosaccharides with a degree of polymerization of greater than or equal to 3, releasing xylose from the reducing end. Has low activity on birchwood xylan, oat spelt xylan and arabinoxylan.</text>
</comment>
<comment type="catalytic activity">
    <reaction evidence="3">
        <text>Hydrolysis of (1-&gt;4)-beta-D-xylose residues from the reducing end of oligosaccharides.</text>
        <dbReference type="EC" id="3.2.1.156"/>
    </reaction>
</comment>
<comment type="biophysicochemical properties">
    <phDependence>
        <text evidence="3">Optimum pH is 6.0. Stable between pH 4.0 and 10.0 for 120 minutes.</text>
    </phDependence>
    <temperatureDependence>
        <text evidence="3">Optimum temperature is 40 degrees Celsius. Stable up to 40 degrees Celsius.</text>
    </temperatureDependence>
</comment>
<comment type="similarity">
    <text evidence="2">Belongs to the glycosyl hydrolase 8 (cellulase D) family.</text>
</comment>
<sequence>MTNATDTNKTLGESMFAQCGYAQDAIDKRVSQVWHEIFEGPNKFYWENDEGLAYVMDTGNNDVRTEGMSYAMMIALQYDRKDVFDKLWGWVMRHMYMKDGHHAHYFAWSVAPDGTPNSNGPAPDGEEYFAMDLFLASRRWGDGEDIYEYSAWGREILRYCVHKGERYDGEPMWNPDNKLIKFIPETEWSDPSYHLPHFYEVFAEEADEEDRPFWHEAAAASRRYLQAACDERTGMNAEYADYDGKPHVDESNHWHFYSDAYRTAANIGLDAAWNGPQEVLCDRVAALQRFFLTHDRTSVYAIDGTAVDEVVLHPVGFLAATAQGALAAVHSAQPDAEHNAREWVRMLWNTPMRTGTRRYYDNFLYAFAMLALSGKYRYE</sequence>
<proteinExistence type="evidence at protein level"/>
<dbReference type="EC" id="3.2.1.156"/>
<dbReference type="EMBL" id="AY233379">
    <property type="protein sequence ID" value="AAO67498.1"/>
    <property type="molecule type" value="Genomic_DNA"/>
</dbReference>
<dbReference type="EMBL" id="AP009256">
    <property type="protein sequence ID" value="BAF39081.1"/>
    <property type="molecule type" value="Genomic_DNA"/>
</dbReference>
<dbReference type="RefSeq" id="WP_004220042.1">
    <property type="nucleotide sequence ID" value="NC_008618.1"/>
</dbReference>
<dbReference type="SMR" id="A1A048"/>
<dbReference type="STRING" id="367928.BAD_0300"/>
<dbReference type="CAZy" id="GH8">
    <property type="family name" value="Glycoside Hydrolase Family 8"/>
</dbReference>
<dbReference type="PaxDb" id="1680-BADO_0309"/>
<dbReference type="GeneID" id="45598834"/>
<dbReference type="KEGG" id="bad:BAD_0300"/>
<dbReference type="HOGENOM" id="CLU_037722_0_0_11"/>
<dbReference type="BRENDA" id="3.2.1.156">
    <property type="organism ID" value="842"/>
</dbReference>
<dbReference type="Proteomes" id="UP000008702">
    <property type="component" value="Chromosome"/>
</dbReference>
<dbReference type="GO" id="GO:0033951">
    <property type="term" value="F:oligosaccharide reducing-end xylanase activity"/>
    <property type="evidence" value="ECO:0007669"/>
    <property type="project" value="UniProtKB-EC"/>
</dbReference>
<dbReference type="GO" id="GO:0045493">
    <property type="term" value="P:xylan catabolic process"/>
    <property type="evidence" value="ECO:0007669"/>
    <property type="project" value="UniProtKB-KW"/>
</dbReference>
<dbReference type="Gene3D" id="1.50.10.10">
    <property type="match status" value="1"/>
</dbReference>
<dbReference type="InterPro" id="IPR008928">
    <property type="entry name" value="6-hairpin_glycosidase_sf"/>
</dbReference>
<dbReference type="InterPro" id="IPR012341">
    <property type="entry name" value="6hp_glycosidase-like_sf"/>
</dbReference>
<dbReference type="InterPro" id="IPR002037">
    <property type="entry name" value="Glyco_hydro_8"/>
</dbReference>
<dbReference type="Pfam" id="PF01270">
    <property type="entry name" value="Glyco_hydro_8"/>
    <property type="match status" value="1"/>
</dbReference>
<dbReference type="PRINTS" id="PR00735">
    <property type="entry name" value="GLHYDRLASE8"/>
</dbReference>
<dbReference type="SUPFAM" id="SSF48208">
    <property type="entry name" value="Six-hairpin glycosidases"/>
    <property type="match status" value="1"/>
</dbReference>
<name>REOX_BIFAA</name>
<protein>
    <recommendedName>
        <fullName evidence="4">Reducing end xylose-releasing exo-oligoxylanase</fullName>
        <shortName evidence="4">RexA</shortName>
        <ecNumber>3.2.1.156</ecNumber>
    </recommendedName>
</protein>
<feature type="chain" id="PRO_0000397236" description="Reducing end xylose-releasing exo-oligoxylanase">
    <location>
        <begin position="1"/>
        <end position="379"/>
    </location>
</feature>
<feature type="active site" description="Proton donor" evidence="1">
    <location>
        <position position="66"/>
    </location>
</feature>
<feature type="active site" description="Proton acceptor" evidence="1">
    <location>
        <position position="259"/>
    </location>
</feature>
<reference evidence="6" key="1">
    <citation type="journal article" date="2005" name="Appl. Microbiol. Biotechnol.">
        <title>Cloning and characterization of arabinoxylan arabinofuranohydrolase-D3 (AXHd3) from Bifidobacterium adolescentis DSM20083.</title>
        <authorList>
            <person name="van den Broek L.A."/>
            <person name="Lloyd R.M."/>
            <person name="Beldman G."/>
            <person name="Verdoes J.C."/>
            <person name="McCleary B.V."/>
            <person name="Voragen A.G."/>
        </authorList>
    </citation>
    <scope>NUCLEOTIDE SEQUENCE [GENOMIC DNA]</scope>
</reference>
<reference evidence="7" key="2">
    <citation type="submission" date="2006-12" db="EMBL/GenBank/DDBJ databases">
        <title>Bifidobacterium adolescentis complete genome sequence.</title>
        <authorList>
            <person name="Suzuki T."/>
            <person name="Tsuda Y."/>
            <person name="Kanou N."/>
            <person name="Inoue T."/>
            <person name="Kumazaki K."/>
            <person name="Nagano S."/>
            <person name="Hirai S."/>
            <person name="Tanaka K."/>
            <person name="Watanabe K."/>
        </authorList>
    </citation>
    <scope>NUCLEOTIDE SEQUENCE [LARGE SCALE GENOMIC DNA]</scope>
    <source>
        <strain>ATCC 15703 / DSM 20083 / NCTC 11814 / E194a</strain>
    </source>
</reference>
<reference evidence="5" key="3">
    <citation type="journal article" date="2007" name="Appl. Environ. Microbiol.">
        <title>Recombinant expression and characterization of a reducing-end xylose-releasing exo-oligoxylanase from Bifidobacterium adolescentis.</title>
        <authorList>
            <person name="Lagaert S."/>
            <person name="Van Campenhout S."/>
            <person name="Pollet A."/>
            <person name="Bourgois T.M."/>
            <person name="Delcour J.A."/>
            <person name="Courtin C.M."/>
            <person name="Volckaert G."/>
        </authorList>
    </citation>
    <scope>FUNCTION</scope>
    <scope>CATALYTIC ACTIVITY</scope>
    <scope>BIOPHYSICOCHEMICAL PROPERTIES</scope>
</reference>
<organism>
    <name type="scientific">Bifidobacterium adolescentis (strain ATCC 15703 / DSM 20083 / NCTC 11814 / E194a)</name>
    <dbReference type="NCBI Taxonomy" id="367928"/>
    <lineage>
        <taxon>Bacteria</taxon>
        <taxon>Bacillati</taxon>
        <taxon>Actinomycetota</taxon>
        <taxon>Actinomycetes</taxon>
        <taxon>Bifidobacteriales</taxon>
        <taxon>Bifidobacteriaceae</taxon>
        <taxon>Bifidobacterium</taxon>
    </lineage>
</organism>
<gene>
    <name evidence="6" type="primary">xylA</name>
    <name type="ordered locus">BAD_0300</name>
</gene>
<keyword id="KW-0119">Carbohydrate metabolism</keyword>
<keyword id="KW-0326">Glycosidase</keyword>
<keyword id="KW-0378">Hydrolase</keyword>
<keyword id="KW-0624">Polysaccharide degradation</keyword>
<keyword id="KW-1185">Reference proteome</keyword>
<keyword id="KW-0858">Xylan degradation</keyword>